<accession>Q3B327</accession>
<sequence>MKKTAKTDTEDAFKFRSTFGEHYYDGYGARHETPHIVAYTGEVTAAGPGRVLISSPLGSCIAVCAYDPGTRVGGLAHVMLPGVPPAHAETGKDRYAAHALETLFSVMQNEGADPGNLLICLIGGANVLRREHDTIHIDNLRSLTSLILQRNLPICRTMTGGSERMMARMETKTGRIFQTTGNNPEEMLFDYFTHNIENPDN</sequence>
<dbReference type="EC" id="3.5.1.44" evidence="1"/>
<dbReference type="EMBL" id="CP000096">
    <property type="protein sequence ID" value="ABB24254.1"/>
    <property type="molecule type" value="Genomic_DNA"/>
</dbReference>
<dbReference type="RefSeq" id="WP_011358126.1">
    <property type="nucleotide sequence ID" value="NC_007512.1"/>
</dbReference>
<dbReference type="SMR" id="Q3B327"/>
<dbReference type="STRING" id="319225.Plut_1395"/>
<dbReference type="KEGG" id="plt:Plut_1395"/>
<dbReference type="eggNOG" id="COG1871">
    <property type="taxonomic scope" value="Bacteria"/>
</dbReference>
<dbReference type="HOGENOM" id="CLU_1359327_0_0_10"/>
<dbReference type="OrthoDB" id="9807202at2"/>
<dbReference type="Proteomes" id="UP000002709">
    <property type="component" value="Chromosome"/>
</dbReference>
<dbReference type="GO" id="GO:0050568">
    <property type="term" value="F:protein-glutamine glutaminase activity"/>
    <property type="evidence" value="ECO:0007669"/>
    <property type="project" value="UniProtKB-UniRule"/>
</dbReference>
<dbReference type="GO" id="GO:0006935">
    <property type="term" value="P:chemotaxis"/>
    <property type="evidence" value="ECO:0007669"/>
    <property type="project" value="UniProtKB-UniRule"/>
</dbReference>
<dbReference type="CDD" id="cd16352">
    <property type="entry name" value="CheD"/>
    <property type="match status" value="1"/>
</dbReference>
<dbReference type="Gene3D" id="3.30.1330.200">
    <property type="match status" value="1"/>
</dbReference>
<dbReference type="HAMAP" id="MF_01440">
    <property type="entry name" value="CheD"/>
    <property type="match status" value="1"/>
</dbReference>
<dbReference type="InterPro" id="IPR038592">
    <property type="entry name" value="CheD-like_sf"/>
</dbReference>
<dbReference type="InterPro" id="IPR005659">
    <property type="entry name" value="Chemorcpt_Glu_NH3ase_CheD"/>
</dbReference>
<dbReference type="InterPro" id="IPR011324">
    <property type="entry name" value="Cytotoxic_necrot_fac-like_cat"/>
</dbReference>
<dbReference type="PANTHER" id="PTHR35147">
    <property type="entry name" value="CHEMORECEPTOR GLUTAMINE DEAMIDASE CHED-RELATED"/>
    <property type="match status" value="1"/>
</dbReference>
<dbReference type="PANTHER" id="PTHR35147:SF1">
    <property type="entry name" value="CHEMORECEPTOR GLUTAMINE DEAMIDASE CHED-RELATED"/>
    <property type="match status" value="1"/>
</dbReference>
<dbReference type="Pfam" id="PF03975">
    <property type="entry name" value="CheD"/>
    <property type="match status" value="1"/>
</dbReference>
<dbReference type="SUPFAM" id="SSF64438">
    <property type="entry name" value="CNF1/YfiH-like putative cysteine hydrolases"/>
    <property type="match status" value="1"/>
</dbReference>
<organism>
    <name type="scientific">Chlorobium luteolum (strain DSM 273 / BCRC 81028 / 2530)</name>
    <name type="common">Pelodictyon luteolum</name>
    <dbReference type="NCBI Taxonomy" id="319225"/>
    <lineage>
        <taxon>Bacteria</taxon>
        <taxon>Pseudomonadati</taxon>
        <taxon>Chlorobiota</taxon>
        <taxon>Chlorobiia</taxon>
        <taxon>Chlorobiales</taxon>
        <taxon>Chlorobiaceae</taxon>
        <taxon>Chlorobium/Pelodictyon group</taxon>
        <taxon>Pelodictyon</taxon>
    </lineage>
</organism>
<name>CHED_CHLL3</name>
<evidence type="ECO:0000255" key="1">
    <source>
        <dbReference type="HAMAP-Rule" id="MF_01440"/>
    </source>
</evidence>
<proteinExistence type="inferred from homology"/>
<reference key="1">
    <citation type="submission" date="2005-08" db="EMBL/GenBank/DDBJ databases">
        <title>Complete sequence of Pelodictyon luteolum DSM 273.</title>
        <authorList>
            <consortium name="US DOE Joint Genome Institute"/>
            <person name="Copeland A."/>
            <person name="Lucas S."/>
            <person name="Lapidus A."/>
            <person name="Barry K."/>
            <person name="Detter J.C."/>
            <person name="Glavina T."/>
            <person name="Hammon N."/>
            <person name="Israni S."/>
            <person name="Pitluck S."/>
            <person name="Bryant D."/>
            <person name="Schmutz J."/>
            <person name="Larimer F."/>
            <person name="Land M."/>
            <person name="Kyrpides N."/>
            <person name="Ivanova N."/>
            <person name="Richardson P."/>
        </authorList>
    </citation>
    <scope>NUCLEOTIDE SEQUENCE [LARGE SCALE GENOMIC DNA]</scope>
    <source>
        <strain>DSM 273 / BCRC 81028 / 2530</strain>
    </source>
</reference>
<feature type="chain" id="PRO_0000251049" description="Probable chemoreceptor glutamine deamidase CheD">
    <location>
        <begin position="1"/>
        <end position="201"/>
    </location>
</feature>
<protein>
    <recommendedName>
        <fullName evidence="1">Probable chemoreceptor glutamine deamidase CheD</fullName>
        <ecNumber evidence="1">3.5.1.44</ecNumber>
    </recommendedName>
</protein>
<comment type="function">
    <text evidence="1">Probably deamidates glutamine residues to glutamate on methyl-accepting chemotaxis receptors (MCPs), playing an important role in chemotaxis.</text>
</comment>
<comment type="catalytic activity">
    <reaction evidence="1">
        <text>L-glutaminyl-[protein] + H2O = L-glutamyl-[protein] + NH4(+)</text>
        <dbReference type="Rhea" id="RHEA:16441"/>
        <dbReference type="Rhea" id="RHEA-COMP:10207"/>
        <dbReference type="Rhea" id="RHEA-COMP:10208"/>
        <dbReference type="ChEBI" id="CHEBI:15377"/>
        <dbReference type="ChEBI" id="CHEBI:28938"/>
        <dbReference type="ChEBI" id="CHEBI:29973"/>
        <dbReference type="ChEBI" id="CHEBI:30011"/>
        <dbReference type="EC" id="3.5.1.44"/>
    </reaction>
</comment>
<comment type="similarity">
    <text evidence="1">Belongs to the CheD family.</text>
</comment>
<gene>
    <name evidence="1" type="primary">cheD</name>
    <name type="ordered locus">Plut_1395</name>
</gene>
<keyword id="KW-0145">Chemotaxis</keyword>
<keyword id="KW-0378">Hydrolase</keyword>
<keyword id="KW-1185">Reference proteome</keyword>